<proteinExistence type="inferred from homology"/>
<sequence length="743" mass="81393">MEASGSASWARVSKNLIERRAVKGCLLPTPSDVMDAAVMALKDATENVVSKHLFSVDRTNALSVIHTNAVPESIITTAILRDTNGEYRREYEDSAKCNLAATDLSQDGMWEVVIKSYWRYLRESSGAEVVDRGGVGNTTQSVLSVLILQSTFGKKRLSKNPFKHKGPNVSYKSNLENLRAAFTKIEKYMYYMRPNDPMTKSEDTELRLHELLAYVATCYRWLLWFMDLTDAKVLKNIDKGPVITHGPRETRPPDELVRRHLKSGPAISAGTGDALTLSTATADALIVLLRMSVSWTSHSWKSNTHGVTGAIVAAVELVTLIHHHLQYIINTIFAGYVCWLDGGVENSYLNSALRNQGRFDHFAGKLVPIMATLSWANMEKGTVMWFKYALAKSIVCHGSPTQHYLTVLDSIASKRTGAGLPPGATFGRTANFQGQFGCPPQGPLPAPPNSKTKSMFKRPGRGSVRSLKQLPASTPNMVSSATTYNAGGNTAATSGQGEEAIQIHASGELNDCIWYLNGTYSHQRSDSSSSDNSSCSSTETEYITISSTPSPTREVVYTDPLLGSDEEKDASPQPANTVSEYSSPANSGYMRPRSTLAEEIWQLRDSDYTPYMRPSRAGRPRLRLEDQTLQTLPGCKPPANSPEDNFEDTLFSSSQIYSDNAHSTFRPRARCVDDEYGLTALAALSASQAKARRVRLGTTTPTSANEATEKYTTPSSGGCIRRTLSTSESPESSPEQQERVSSL</sequence>
<gene>
    <name type="ORF">14</name>
    <name type="ORF">B7</name>
</gene>
<keyword id="KW-0010">Activator</keyword>
<keyword id="KW-1032">Host cell membrane</keyword>
<keyword id="KW-1043">Host membrane</keyword>
<keyword id="KW-0472">Membrane</keyword>
<keyword id="KW-0804">Transcription</keyword>
<keyword id="KW-0805">Transcription regulation</keyword>
<keyword id="KW-0946">Virion</keyword>
<keyword id="KW-0920">Virion tegument</keyword>
<name>TEG1_EHV4</name>
<reference key="1">
    <citation type="journal article" date="1998" name="J. Gen. Virol.">
        <title>The DNA sequence of equine herpesvirus-4.</title>
        <authorList>
            <person name="Telford E.A."/>
            <person name="Watson M.S."/>
            <person name="Perry J."/>
            <person name="Cullinane A.A."/>
            <person name="Davison A.J."/>
        </authorList>
    </citation>
    <scope>NUCLEOTIDE SEQUENCE [LARGE SCALE GENOMIC DNA]</scope>
    <source>
        <strain>NS80567</strain>
    </source>
</reference>
<reference key="2">
    <citation type="journal article" date="1991" name="J. Virol.">
        <title>Antigenic and protein sequence homology between VP13/14, a herpes simplex virus type 1 tegument protein, and gp10, a glycoprotein of equine herpesvirus 1 and 4.</title>
        <authorList>
            <person name="Whittaker G.R."/>
            <person name="Riggio M.P."/>
            <person name="Halliburton I.W."/>
            <person name="Killington R.A."/>
            <person name="Allen G.P."/>
            <person name="Meredith D.M."/>
        </authorList>
    </citation>
    <scope>NUCLEOTIDE SEQUENCE [GENOMIC DNA] OF 1-43</scope>
</reference>
<feature type="chain" id="PRO_0000115794" description="Tegument protein UL46 homolog">
    <location>
        <begin position="1"/>
        <end position="743"/>
    </location>
</feature>
<feature type="region of interest" description="Disordered" evidence="3">
    <location>
        <begin position="437"/>
        <end position="481"/>
    </location>
</feature>
<feature type="region of interest" description="Disordered" evidence="3">
    <location>
        <begin position="522"/>
        <end position="590"/>
    </location>
</feature>
<feature type="region of interest" description="Disordered" evidence="3">
    <location>
        <begin position="693"/>
        <end position="743"/>
    </location>
</feature>
<feature type="compositionally biased region" description="Low complexity" evidence="3">
    <location>
        <begin position="526"/>
        <end position="552"/>
    </location>
</feature>
<feature type="compositionally biased region" description="Polar residues" evidence="3">
    <location>
        <begin position="573"/>
        <end position="586"/>
    </location>
</feature>
<feature type="compositionally biased region" description="Polar residues" evidence="3">
    <location>
        <begin position="697"/>
        <end position="716"/>
    </location>
</feature>
<feature type="compositionally biased region" description="Low complexity" evidence="3">
    <location>
        <begin position="722"/>
        <end position="743"/>
    </location>
</feature>
<organismHost>
    <name type="scientific">Equus caballus</name>
    <name type="common">Horse</name>
    <dbReference type="NCBI Taxonomy" id="9796"/>
</organismHost>
<protein>
    <recommendedName>
        <fullName>Tegument protein UL46 homolog</fullName>
    </recommendedName>
    <alternativeName>
        <fullName>Tegument protein VP11/12 homolog</fullName>
    </alternativeName>
</protein>
<evidence type="ECO:0000250" key="1"/>
<evidence type="ECO:0000250" key="2">
    <source>
        <dbReference type="UniProtKB" id="P10230"/>
    </source>
</evidence>
<evidence type="ECO:0000256" key="3">
    <source>
        <dbReference type="SAM" id="MobiDB-lite"/>
    </source>
</evidence>
<evidence type="ECO:0000305" key="4"/>
<accession>Q00041</accession>
<accession>O39256</accession>
<organism>
    <name type="scientific">Equine herpesvirus 4 (strain 1942)</name>
    <name type="common">EHV-4</name>
    <name type="synonym">Equine rhinopneumonitis virus</name>
    <dbReference type="NCBI Taxonomy" id="10333"/>
    <lineage>
        <taxon>Viruses</taxon>
        <taxon>Duplodnaviria</taxon>
        <taxon>Heunggongvirae</taxon>
        <taxon>Peploviricota</taxon>
        <taxon>Herviviricetes</taxon>
        <taxon>Herpesvirales</taxon>
        <taxon>Orthoherpesviridae</taxon>
        <taxon>Alphaherpesvirinae</taxon>
        <taxon>Varicellovirus</taxon>
        <taxon>Varicellovirus equidalpha4</taxon>
        <taxon>Equid alphaherpesvirus 4</taxon>
    </lineage>
</organism>
<comment type="function">
    <text evidence="1">Abundant tegument protein. Trans-activates the immediate early genes (By similarity).</text>
</comment>
<comment type="subunit">
    <text evidence="1">Interacts with VP16.</text>
</comment>
<comment type="subcellular location">
    <subcellularLocation>
        <location evidence="2">Virion tegument</location>
    </subcellularLocation>
    <subcellularLocation>
        <location evidence="2">Host cell membrane</location>
        <topology evidence="2">Peripheral membrane protein</topology>
    </subcellularLocation>
</comment>
<comment type="similarity">
    <text evidence="4">Belongs to the herpesviridae HHV-1 VP11/12 protein family.</text>
</comment>
<dbReference type="EMBL" id="AF030027">
    <property type="protein sequence ID" value="AAC59528.1"/>
    <property type="molecule type" value="Genomic_DNA"/>
</dbReference>
<dbReference type="EMBL" id="X17684">
    <property type="protein sequence ID" value="CAA35673.1"/>
    <property type="molecule type" value="Genomic_DNA"/>
</dbReference>
<dbReference type="PIR" id="S36709">
    <property type="entry name" value="S36709"/>
</dbReference>
<dbReference type="PIR" id="T42557">
    <property type="entry name" value="T42557"/>
</dbReference>
<dbReference type="KEGG" id="vg:1487577"/>
<dbReference type="Proteomes" id="UP000009245">
    <property type="component" value="Segment"/>
</dbReference>
<dbReference type="GO" id="GO:0020002">
    <property type="term" value="C:host cell plasma membrane"/>
    <property type="evidence" value="ECO:0007669"/>
    <property type="project" value="UniProtKB-SubCell"/>
</dbReference>
<dbReference type="GO" id="GO:0016020">
    <property type="term" value="C:membrane"/>
    <property type="evidence" value="ECO:0007669"/>
    <property type="project" value="UniProtKB-KW"/>
</dbReference>
<dbReference type="GO" id="GO:0019033">
    <property type="term" value="C:viral tegument"/>
    <property type="evidence" value="ECO:0007669"/>
    <property type="project" value="UniProtKB-SubCell"/>
</dbReference>
<dbReference type="GO" id="GO:0006355">
    <property type="term" value="P:regulation of DNA-templated transcription"/>
    <property type="evidence" value="ECO:0007669"/>
    <property type="project" value="InterPro"/>
</dbReference>
<dbReference type="InterPro" id="IPR005051">
    <property type="entry name" value="Herpes_UL46"/>
</dbReference>
<dbReference type="Pfam" id="PF03387">
    <property type="entry name" value="Herpes_UL46"/>
    <property type="match status" value="1"/>
</dbReference>